<proteinExistence type="predicted"/>
<sequence>MSERTASQPNTDRSRRRLRVVLDVALSDAAACPLEEIDGEVTAVRHQYTGDDCHADVTVAPACPDDDRSDVMHVATQTTDSCLCCVFSDHGCVPQITAVAADTITVETYLADRTTLTDLVADLKAVANTVSLTHLTRLAADDQSGDSHTHVTLDLFKLTDKQREAAAAAVAKGYYATPRGADLSDLATALGISKSAVSQRLSAVESKLATSAFTEAQQSAGSAP</sequence>
<protein>
    <recommendedName>
        <fullName>Dimethyl sulfoxide reductase transcriptional activator</fullName>
        <shortName>DMSO reductase transcriptional activator</shortName>
    </recommendedName>
</protein>
<name>DMSR_HALSA</name>
<feature type="chain" id="PRO_0000428979" description="Dimethyl sulfoxide reductase transcriptional activator">
    <location>
        <begin position="1"/>
        <end position="224"/>
    </location>
</feature>
<feature type="domain" description="HTH bat-type" evidence="1">
    <location>
        <begin position="158"/>
        <end position="209"/>
    </location>
</feature>
<comment type="function">
    <text evidence="2">Involved in activating dmsEABCD gene expression related to dimethyl sulfoxide (DMSO) reductase. Required for anaerobic respiration on dimethyl sulfoxide (DMSO) and trimethylamine N-oxide (TMAO).</text>
</comment>
<comment type="disruption phenotype">
    <text evidence="2">Cells lacking this gene displayed a marked decrease in growth under anaerobic conditions using either DMSO or TMAO as terminal electron acceptors.</text>
</comment>
<keyword id="KW-0010">Activator</keyword>
<keyword id="KW-1185">Reference proteome</keyword>
<keyword id="KW-0804">Transcription</keyword>
<keyword id="KW-0805">Transcription regulation</keyword>
<accession>Q9HR76</accession>
<evidence type="ECO:0000255" key="1"/>
<evidence type="ECO:0000269" key="2">
    <source>
    </source>
</evidence>
<organism>
    <name type="scientific">Halobacterium salinarum (strain ATCC 700922 / JCM 11081 / NRC-1)</name>
    <name type="common">Halobacterium halobium</name>
    <dbReference type="NCBI Taxonomy" id="64091"/>
    <lineage>
        <taxon>Archaea</taxon>
        <taxon>Methanobacteriati</taxon>
        <taxon>Methanobacteriota</taxon>
        <taxon>Stenosarchaea group</taxon>
        <taxon>Halobacteria</taxon>
        <taxon>Halobacteriales</taxon>
        <taxon>Halobacteriaceae</taxon>
        <taxon>Halobacterium</taxon>
        <taxon>Halobacterium salinarum NRC-34001</taxon>
    </lineage>
</organism>
<reference key="1">
    <citation type="journal article" date="2000" name="Proc. Natl. Acad. Sci. U.S.A.">
        <title>Genome sequence of Halobacterium species NRC-1.</title>
        <authorList>
            <person name="Ng W.V."/>
            <person name="Kennedy S.P."/>
            <person name="Mahairas G.G."/>
            <person name="Berquist B."/>
            <person name="Pan M."/>
            <person name="Shukla H.D."/>
            <person name="Lasky S.R."/>
            <person name="Baliga N.S."/>
            <person name="Thorsson V."/>
            <person name="Sbrogna J."/>
            <person name="Swartzell S."/>
            <person name="Weir D."/>
            <person name="Hall J."/>
            <person name="Dahl T.A."/>
            <person name="Welti R."/>
            <person name="Goo Y.A."/>
            <person name="Leithauser B."/>
            <person name="Keller K."/>
            <person name="Cruz R."/>
            <person name="Danson M.J."/>
            <person name="Hough D.W."/>
            <person name="Maddocks D.G."/>
            <person name="Jablonski P.E."/>
            <person name="Krebs M.P."/>
            <person name="Angevine C.M."/>
            <person name="Dale H."/>
            <person name="Isenbarger T.A."/>
            <person name="Peck R.F."/>
            <person name="Pohlschroder M."/>
            <person name="Spudich J.L."/>
            <person name="Jung K.-H."/>
            <person name="Alam M."/>
            <person name="Freitas T."/>
            <person name="Hou S."/>
            <person name="Daniels C.J."/>
            <person name="Dennis P.P."/>
            <person name="Omer A.D."/>
            <person name="Ebhardt H."/>
            <person name="Lowe T.M."/>
            <person name="Liang P."/>
            <person name="Riley M."/>
            <person name="Hood L."/>
            <person name="DasSarma S."/>
        </authorList>
    </citation>
    <scope>NUCLEOTIDE SEQUENCE [LARGE SCALE GENOMIC DNA]</scope>
    <source>
        <strain>ATCC 700922 / JCM 11081 / NRC-1</strain>
    </source>
</reference>
<reference key="2">
    <citation type="journal article" date="2005" name="J. Bacteriol.">
        <title>Genomic analysis of anaerobic respiration in the archaeon Halobacterium sp. strain NRC-1: dimethyl sulfoxide and trimethylamine N-oxide as terminal electron acceptors.</title>
        <authorList>
            <person name="Muller J.A."/>
            <person name="DasSarma S."/>
        </authorList>
    </citation>
    <scope>FUNCTION</scope>
    <scope>DISRUPTION PHENOTYPE</scope>
    <source>
        <strain>ATCC 700922 / JCM 11081 / NRC-1</strain>
    </source>
</reference>
<gene>
    <name type="primary">dmsR</name>
    <name type="ordered locus">VNG_0826C</name>
</gene>
<dbReference type="EMBL" id="AE004437">
    <property type="protein sequence ID" value="AAG19282.1"/>
    <property type="molecule type" value="Genomic_DNA"/>
</dbReference>
<dbReference type="PIR" id="F84239">
    <property type="entry name" value="F84239"/>
</dbReference>
<dbReference type="RefSeq" id="WP_010902578.1">
    <property type="nucleotide sequence ID" value="NC_002607.1"/>
</dbReference>
<dbReference type="STRING" id="64091.VNG_0826C"/>
<dbReference type="PaxDb" id="64091-VNG_0826C"/>
<dbReference type="GeneID" id="89349252"/>
<dbReference type="KEGG" id="hal:VNG_0826C"/>
<dbReference type="PATRIC" id="fig|64091.14.peg.635"/>
<dbReference type="HOGENOM" id="CLU_109670_1_0_2"/>
<dbReference type="InParanoid" id="Q9HR76"/>
<dbReference type="OrthoDB" id="51502at2157"/>
<dbReference type="PhylomeDB" id="Q9HR76"/>
<dbReference type="Proteomes" id="UP000000554">
    <property type="component" value="Chromosome"/>
</dbReference>
<dbReference type="InterPro" id="IPR056433">
    <property type="entry name" value="DmsR-like_N"/>
</dbReference>
<dbReference type="InterPro" id="IPR007050">
    <property type="entry name" value="HTH_bacterioopsin"/>
</dbReference>
<dbReference type="PANTHER" id="PTHR34236">
    <property type="entry name" value="DIMETHYL SULFOXIDE REDUCTASE TRANSCRIPTIONAL ACTIVATOR"/>
    <property type="match status" value="1"/>
</dbReference>
<dbReference type="PANTHER" id="PTHR34236:SF1">
    <property type="entry name" value="DIMETHYL SULFOXIDE REDUCTASE TRANSCRIPTIONAL ACTIVATOR"/>
    <property type="match status" value="1"/>
</dbReference>
<dbReference type="Pfam" id="PF24277">
    <property type="entry name" value="DmsR_N"/>
    <property type="match status" value="1"/>
</dbReference>
<dbReference type="Pfam" id="PF04967">
    <property type="entry name" value="HTH_10"/>
    <property type="match status" value="1"/>
</dbReference>